<proteinExistence type="evidence at protein level"/>
<name>T2C2_HAEIF</name>
<sequence length="258" mass="29871">MSFIKPIYQDINSILIGQKVKRPKSGTLSGHAAGEPFEKLVYKFLKENLSDLTFKQYEYLNDLFMKNPAIIGHEARYKLFNSPTLLFLLSRGKAATENWSIENLFEEKQNDTADILLVKDQFYELLDVKRRNISKSAQAPNIISAYKLAQTCAKMIDNKEFDLFDINYLEVDSELNGEDLVCVSTSFAELFKSEPSELYINWAAAMQIQFHVRDLDQGFNGTREEWAKSYLKHFVTQAEQRAISMIDKFVKPFKKYIL</sequence>
<organism>
    <name type="scientific">Haemophilus influenzae</name>
    <dbReference type="NCBI Taxonomy" id="727"/>
    <lineage>
        <taxon>Bacteria</taxon>
        <taxon>Pseudomonadati</taxon>
        <taxon>Pseudomonadota</taxon>
        <taxon>Gammaproteobacteria</taxon>
        <taxon>Pasteurellales</taxon>
        <taxon>Pasteurellaceae</taxon>
        <taxon>Haemophilus</taxon>
    </lineage>
</organism>
<evidence type="ECO:0000269" key="1">
    <source>
    </source>
</evidence>
<evidence type="ECO:0000303" key="2">
    <source>
    </source>
</evidence>
<evidence type="ECO:0000303" key="3">
    <source>
    </source>
</evidence>
<evidence type="ECO:0007829" key="4">
    <source>
        <dbReference type="PDB" id="1TW8"/>
    </source>
</evidence>
<evidence type="ECO:0007829" key="5">
    <source>
        <dbReference type="PDB" id="2AUD"/>
    </source>
</evidence>
<evidence type="ECO:0007829" key="6">
    <source>
        <dbReference type="PDB" id="2GIG"/>
    </source>
</evidence>
<evidence type="ECO:0007829" key="7">
    <source>
        <dbReference type="PDB" id="2GIH"/>
    </source>
</evidence>
<evidence type="ECO:0007829" key="8">
    <source>
        <dbReference type="PDB" id="2GIJ"/>
    </source>
</evidence>
<dbReference type="EC" id="3.1.21.4"/>
<dbReference type="EMBL" id="X52124">
    <property type="protein sequence ID" value="CAA36370.1"/>
    <property type="molecule type" value="Genomic_DNA"/>
</dbReference>
<dbReference type="PIR" id="S10323">
    <property type="entry name" value="S10323"/>
</dbReference>
<dbReference type="PDB" id="1KC6">
    <property type="method" value="X-ray"/>
    <property type="resolution" value="2.60 A"/>
    <property type="chains" value="A/B/C/D=2-258"/>
</dbReference>
<dbReference type="PDB" id="1TW8">
    <property type="method" value="X-ray"/>
    <property type="resolution" value="2.80 A"/>
    <property type="chains" value="A/B/C/D=2-258"/>
</dbReference>
<dbReference type="PDB" id="1TX3">
    <property type="method" value="X-ray"/>
    <property type="resolution" value="2.50 A"/>
    <property type="chains" value="A/B/C/D=2-258"/>
</dbReference>
<dbReference type="PDB" id="1XHU">
    <property type="method" value="X-ray"/>
    <property type="resolution" value="2.95 A"/>
    <property type="chains" value="A/B/C/D=2-258"/>
</dbReference>
<dbReference type="PDB" id="1XHV">
    <property type="method" value="X-ray"/>
    <property type="resolution" value="2.50 A"/>
    <property type="chains" value="A/B/C/D=2-258"/>
</dbReference>
<dbReference type="PDB" id="2AUD">
    <property type="method" value="X-ray"/>
    <property type="resolution" value="2.10 A"/>
    <property type="chains" value="A=2-258"/>
</dbReference>
<dbReference type="PDB" id="2GIE">
    <property type="method" value="X-ray"/>
    <property type="resolution" value="2.60 A"/>
    <property type="chains" value="A/B/C/D=2-258"/>
</dbReference>
<dbReference type="PDB" id="2GIG">
    <property type="method" value="X-ray"/>
    <property type="resolution" value="1.83 A"/>
    <property type="chains" value="A/B=2-258"/>
</dbReference>
<dbReference type="PDB" id="2GIH">
    <property type="method" value="X-ray"/>
    <property type="resolution" value="2.50 A"/>
    <property type="chains" value="A/B=2-258"/>
</dbReference>
<dbReference type="PDB" id="2GII">
    <property type="method" value="X-ray"/>
    <property type="resolution" value="2.30 A"/>
    <property type="chains" value="A/B=2-258"/>
</dbReference>
<dbReference type="PDB" id="2GIJ">
    <property type="method" value="X-ray"/>
    <property type="resolution" value="1.93 A"/>
    <property type="chains" value="A/B=2-258"/>
</dbReference>
<dbReference type="PDB" id="3E3Y">
    <property type="method" value="X-ray"/>
    <property type="resolution" value="2.13 A"/>
    <property type="chains" value="A/B=2-258"/>
</dbReference>
<dbReference type="PDB" id="3E40">
    <property type="method" value="X-ray"/>
    <property type="resolution" value="2.10 A"/>
    <property type="chains" value="A/B=2-258"/>
</dbReference>
<dbReference type="PDB" id="3E41">
    <property type="method" value="X-ray"/>
    <property type="resolution" value="2.73 A"/>
    <property type="chains" value="A/B=2-258"/>
</dbReference>
<dbReference type="PDB" id="3E42">
    <property type="method" value="X-ray"/>
    <property type="resolution" value="2.68 A"/>
    <property type="chains" value="A/B=2-258"/>
</dbReference>
<dbReference type="PDB" id="3E43">
    <property type="method" value="X-ray"/>
    <property type="resolution" value="2.73 A"/>
    <property type="chains" value="A/B=2-258"/>
</dbReference>
<dbReference type="PDB" id="3E44">
    <property type="method" value="X-ray"/>
    <property type="resolution" value="2.52 A"/>
    <property type="chains" value="A/B=2-258"/>
</dbReference>
<dbReference type="PDB" id="3E45">
    <property type="method" value="X-ray"/>
    <property type="resolution" value="2.78 A"/>
    <property type="chains" value="A/B=2-258"/>
</dbReference>
<dbReference type="PDB" id="3EBC">
    <property type="method" value="X-ray"/>
    <property type="resolution" value="2.55 A"/>
    <property type="chains" value="A/B=1-258"/>
</dbReference>
<dbReference type="PDBsum" id="1KC6"/>
<dbReference type="PDBsum" id="1TW8"/>
<dbReference type="PDBsum" id="1TX3"/>
<dbReference type="PDBsum" id="1XHU"/>
<dbReference type="PDBsum" id="1XHV"/>
<dbReference type="PDBsum" id="2AUD"/>
<dbReference type="PDBsum" id="2GIE"/>
<dbReference type="PDBsum" id="2GIG"/>
<dbReference type="PDBsum" id="2GIH"/>
<dbReference type="PDBsum" id="2GII"/>
<dbReference type="PDBsum" id="2GIJ"/>
<dbReference type="PDBsum" id="3E3Y"/>
<dbReference type="PDBsum" id="3E40"/>
<dbReference type="PDBsum" id="3E41"/>
<dbReference type="PDBsum" id="3E42"/>
<dbReference type="PDBsum" id="3E43"/>
<dbReference type="PDBsum" id="3E44"/>
<dbReference type="PDBsum" id="3E45"/>
<dbReference type="PDBsum" id="3EBC"/>
<dbReference type="SMR" id="P17743"/>
<dbReference type="DIP" id="DIP-48338N"/>
<dbReference type="BRENDA" id="3.1.21.4">
    <property type="organism ID" value="2529"/>
</dbReference>
<dbReference type="EvolutionaryTrace" id="P17743"/>
<dbReference type="PRO" id="PR:P17743"/>
<dbReference type="GO" id="GO:0003677">
    <property type="term" value="F:DNA binding"/>
    <property type="evidence" value="ECO:0007669"/>
    <property type="project" value="InterPro"/>
</dbReference>
<dbReference type="GO" id="GO:0009036">
    <property type="term" value="F:type II site-specific deoxyribonuclease activity"/>
    <property type="evidence" value="ECO:0007669"/>
    <property type="project" value="UniProtKB-EC"/>
</dbReference>
<dbReference type="GO" id="GO:0009307">
    <property type="term" value="P:DNA restriction-modification system"/>
    <property type="evidence" value="ECO:0007669"/>
    <property type="project" value="UniProtKB-KW"/>
</dbReference>
<dbReference type="CDD" id="cd22329">
    <property type="entry name" value="HincII-like"/>
    <property type="match status" value="1"/>
</dbReference>
<dbReference type="Gene3D" id="3.40.600.10">
    <property type="entry name" value="DNA mismatch repair MutH/Restriction endonuclease, type II"/>
    <property type="match status" value="1"/>
</dbReference>
<dbReference type="InterPro" id="IPR037057">
    <property type="entry name" value="DNA_rep_MutH/T2_RE_sf"/>
</dbReference>
<dbReference type="InterPro" id="IPR011335">
    <property type="entry name" value="Restrct_endonuc-II-like"/>
</dbReference>
<dbReference type="InterPro" id="IPR015307">
    <property type="entry name" value="Restrct_endonuc_II_HincII"/>
</dbReference>
<dbReference type="Pfam" id="PF09226">
    <property type="entry name" value="Endonuc-HincII"/>
    <property type="match status" value="1"/>
</dbReference>
<dbReference type="SUPFAM" id="SSF52980">
    <property type="entry name" value="Restriction endonuclease-like"/>
    <property type="match status" value="1"/>
</dbReference>
<gene>
    <name type="primary">hincIIR</name>
</gene>
<comment type="function">
    <text evidence="1 2">A P subtype restriction enzyme that recognizes the double-stranded sequence 5'-GTYRAC-3' and cleaves after Y-3.</text>
</comment>
<comment type="catalytic activity">
    <reaction>
        <text>Endonucleolytic cleavage of DNA to give specific double-stranded fragments with terminal 5'-phosphates.</text>
        <dbReference type="EC" id="3.1.21.4"/>
    </reaction>
</comment>
<reference key="1">
    <citation type="journal article" date="1990" name="Nucleic Acids Res.">
        <title>Cloning, nucleotide sequence, and expression of the HincII restriction-modification system.</title>
        <authorList>
            <person name="Ito H."/>
            <person name="Sadaoka A."/>
            <person name="Kotani H."/>
            <person name="Hiraoka N."/>
            <person name="Nakamura T."/>
        </authorList>
    </citation>
    <scope>NUCLEOTIDE SEQUENCE [GENOMIC DNA]</scope>
    <scope>PROTEIN SEQUENCE OF 2-26</scope>
    <scope>FUNCTION</scope>
    <source>
        <strain>RC</strain>
    </source>
</reference>
<reference key="2">
    <citation type="journal article" date="2003" name="Nucleic Acids Res.">
        <title>A nomenclature for restriction enzymes, DNA methyltransferases, homing endonucleases and their genes.</title>
        <authorList>
            <person name="Roberts R.J."/>
            <person name="Belfort M."/>
            <person name="Bestor T."/>
            <person name="Bhagwat A.S."/>
            <person name="Bickle T.A."/>
            <person name="Bitinaite J."/>
            <person name="Blumenthal R.M."/>
            <person name="Degtyarev S.K."/>
            <person name="Dryden D.T."/>
            <person name="Dybvig K."/>
            <person name="Firman K."/>
            <person name="Gromova E.S."/>
            <person name="Gumport R.I."/>
            <person name="Halford S.E."/>
            <person name="Hattman S."/>
            <person name="Heitman J."/>
            <person name="Hornby D.P."/>
            <person name="Janulaitis A."/>
            <person name="Jeltsch A."/>
            <person name="Josephsen J."/>
            <person name="Kiss A."/>
            <person name="Klaenhammer T.R."/>
            <person name="Kobayashi I."/>
            <person name="Kong H."/>
            <person name="Krueger D.H."/>
            <person name="Lacks S."/>
            <person name="Marinus M.G."/>
            <person name="Miyahara M."/>
            <person name="Morgan R.D."/>
            <person name="Murray N.E."/>
            <person name="Nagaraja V."/>
            <person name="Piekarowicz A."/>
            <person name="Pingoud A."/>
            <person name="Raleigh E."/>
            <person name="Rao D.N."/>
            <person name="Reich N."/>
            <person name="Repin V.E."/>
            <person name="Selker E.U."/>
            <person name="Shaw P.C."/>
            <person name="Stein D.C."/>
            <person name="Stoddard B.L."/>
            <person name="Szybalski W."/>
            <person name="Trautner T.A."/>
            <person name="Van Etten J.L."/>
            <person name="Vitor J.M."/>
            <person name="Wilson G.G."/>
            <person name="Xu S.Y."/>
        </authorList>
    </citation>
    <scope>NOMENCLATURE</scope>
    <scope>SUBTYPE</scope>
</reference>
<reference key="3">
    <citation type="journal article" date="2002" name="Nat. Struct. Biol.">
        <title>Sequence selectivity and degeneracy of a restriction endonuclease mediated by DNA intercalation.</title>
        <authorList>
            <person name="Horton N.C."/>
            <person name="Dorner L.F."/>
            <person name="Perona J.J."/>
        </authorList>
    </citation>
    <scope>X-RAY CRYSTALLOGRAPHY (2.6 ANGSTROMS) OF 2-258</scope>
</reference>
<reference key="4">
    <citation type="journal article" date="2004" name="Biochemistry">
        <title>Ca2+ binding in the active site of HincII: implications for the catalytic mechanism.</title>
        <authorList>
            <person name="Etzkorn C."/>
            <person name="Horton N.C."/>
        </authorList>
    </citation>
    <scope>X-RAY CRYSTALLOGRAPHY (2.8 ANGSTROMS) OF 2-257</scope>
</reference>
<reference key="5">
    <citation type="journal article" date="2004" name="J. Mol. Biol.">
        <title>Mechanistic insights from the structures of HincII bound to cognate DNA cleaved from addition of Mg2+ and Mn2+.</title>
        <authorList>
            <person name="Etzkorn C."/>
            <person name="Horton N.C."/>
        </authorList>
    </citation>
    <scope>X-RAY CRYSTALLOGRAPHY (2.95 ANGSTROMS) OF 2-257</scope>
</reference>
<reference key="6">
    <citation type="journal article" date="2005" name="J. Mol. Biol.">
        <title>DNA-induced conformational changes in type II restriction endonucleases: the structure of unliganded HincII.</title>
        <authorList>
            <person name="Little E.J."/>
            <person name="Horton N.C."/>
        </authorList>
    </citation>
    <scope>X-RAY CRYSTALLOGRAPHY (2.1 ANGSTROMS) OF 2-257</scope>
</reference>
<reference key="7">
    <citation type="journal article" date="2006" name="J. Biol. Chem.">
        <title>Alteration of sequence specificity of the type II restriction endonuclease HincII through an indirect readout mechanism.</title>
        <authorList>
            <person name="Joshi H.K."/>
            <person name="Etzkorn C."/>
            <person name="Chatwell L."/>
            <person name="Bitinaite J."/>
            <person name="Horton N.C."/>
        </authorList>
    </citation>
    <scope>X-RAY CRYSTALLOGRAPHY (2.6 ANGSTROMS) OF 2-258</scope>
</reference>
<reference key="8">
    <citation type="journal article" date="2008" name="J. Mol. Biol.">
        <title>DNA distortion and specificity in a sequence-specific endonuclease.</title>
        <authorList>
            <person name="Babic A.C."/>
            <person name="Little E.J."/>
            <person name="Manohar V.M."/>
            <person name="Bitinaite J."/>
            <person name="Horton N.C."/>
        </authorList>
    </citation>
    <scope>X-RAY CRYSTALLOGRAPHY (2.13 ANGSTROMS) OF 2-258</scope>
</reference>
<reference key="9">
    <citation type="journal article" date="2008" name="Structure">
        <title>Early interrogation and recognition of DNA sequence by indirect readout.</title>
        <authorList>
            <person name="Little E.J."/>
            <person name="Babic A.C."/>
            <person name="Horton N.C."/>
        </authorList>
    </citation>
    <scope>X-RAY CRYSTALLOGRAPHY (2.55 ANGSTROMS)</scope>
</reference>
<keyword id="KW-0002">3D-structure</keyword>
<keyword id="KW-0903">Direct protein sequencing</keyword>
<keyword id="KW-0255">Endonuclease</keyword>
<keyword id="KW-0378">Hydrolase</keyword>
<keyword id="KW-0540">Nuclease</keyword>
<keyword id="KW-0680">Restriction system</keyword>
<accession>P17743</accession>
<protein>
    <recommendedName>
        <fullName evidence="2">Type II restriction enzyme HincII</fullName>
        <shortName evidence="3">R.HincII</shortName>
        <ecNumber>3.1.21.4</ecNumber>
    </recommendedName>
    <alternativeName>
        <fullName>Endonuclease HincII</fullName>
    </alternativeName>
    <alternativeName>
        <fullName>Type-2 restriction enzyme HincII</fullName>
    </alternativeName>
</protein>
<feature type="initiator methionine" description="Removed" evidence="1">
    <location>
        <position position="1"/>
    </location>
</feature>
<feature type="chain" id="PRO_0000077319" description="Type II restriction enzyme HincII">
    <location>
        <begin position="2"/>
        <end position="258"/>
    </location>
</feature>
<feature type="helix" evidence="6">
    <location>
        <begin position="5"/>
        <end position="7"/>
    </location>
</feature>
<feature type="helix" evidence="6">
    <location>
        <begin position="8"/>
        <end position="15"/>
    </location>
</feature>
<feature type="strand" evidence="6">
    <location>
        <begin position="19"/>
        <end position="21"/>
    </location>
</feature>
<feature type="strand" evidence="4">
    <location>
        <begin position="24"/>
        <end position="26"/>
    </location>
</feature>
<feature type="strand" evidence="7">
    <location>
        <begin position="30"/>
        <end position="32"/>
    </location>
</feature>
<feature type="turn" evidence="6">
    <location>
        <begin position="33"/>
        <end position="36"/>
    </location>
</feature>
<feature type="helix" evidence="6">
    <location>
        <begin position="37"/>
        <end position="48"/>
    </location>
</feature>
<feature type="turn" evidence="6">
    <location>
        <begin position="50"/>
        <end position="52"/>
    </location>
</feature>
<feature type="strand" evidence="6">
    <location>
        <begin position="53"/>
        <end position="55"/>
    </location>
</feature>
<feature type="helix" evidence="6">
    <location>
        <begin position="56"/>
        <end position="65"/>
    </location>
</feature>
<feature type="helix" evidence="6">
    <location>
        <begin position="73"/>
        <end position="78"/>
    </location>
</feature>
<feature type="helix" evidence="6">
    <location>
        <begin position="83"/>
        <end position="89"/>
    </location>
</feature>
<feature type="helix" evidence="6">
    <location>
        <begin position="93"/>
        <end position="98"/>
    </location>
</feature>
<feature type="strand" evidence="5">
    <location>
        <begin position="101"/>
        <end position="103"/>
    </location>
</feature>
<feature type="strand" evidence="6">
    <location>
        <begin position="114"/>
        <end position="119"/>
    </location>
</feature>
<feature type="strand" evidence="6">
    <location>
        <begin position="122"/>
        <end position="132"/>
    </location>
</feature>
<feature type="turn" evidence="7">
    <location>
        <begin position="133"/>
        <end position="135"/>
    </location>
</feature>
<feature type="strand" evidence="6">
    <location>
        <begin position="141"/>
        <end position="144"/>
    </location>
</feature>
<feature type="helix" evidence="6">
    <location>
        <begin position="145"/>
        <end position="158"/>
    </location>
</feature>
<feature type="strand" evidence="6">
    <location>
        <begin position="162"/>
        <end position="176"/>
    </location>
</feature>
<feature type="strand" evidence="6">
    <location>
        <begin position="179"/>
        <end position="189"/>
    </location>
</feature>
<feature type="helix" evidence="6">
    <location>
        <begin position="190"/>
        <end position="192"/>
    </location>
</feature>
<feature type="helix" evidence="6">
    <location>
        <begin position="195"/>
        <end position="197"/>
    </location>
</feature>
<feature type="strand" evidence="6">
    <location>
        <begin position="200"/>
        <end position="202"/>
    </location>
</feature>
<feature type="turn" evidence="8">
    <location>
        <begin position="203"/>
        <end position="206"/>
    </location>
</feature>
<feature type="strand" evidence="6">
    <location>
        <begin position="207"/>
        <end position="209"/>
    </location>
</feature>
<feature type="helix" evidence="6">
    <location>
        <begin position="212"/>
        <end position="214"/>
    </location>
</feature>
<feature type="helix" evidence="6">
    <location>
        <begin position="223"/>
        <end position="249"/>
    </location>
</feature>
<feature type="helix" evidence="6">
    <location>
        <begin position="251"/>
        <end position="256"/>
    </location>
</feature>